<organism>
    <name type="scientific">Escherichia phage lambda</name>
    <name type="common">Bacteriophage lambda</name>
    <dbReference type="NCBI Taxonomy" id="2681611"/>
    <lineage>
        <taxon>Viruses</taxon>
        <taxon>Duplodnaviria</taxon>
        <taxon>Heunggongvirae</taxon>
        <taxon>Uroviricota</taxon>
        <taxon>Caudoviricetes</taxon>
        <taxon>Lambdavirus</taxon>
        <taxon>Lambdavirus lambda</taxon>
    </lineage>
</organism>
<sequence>MNISNSQVNRLRHFVRAGLRSLFRPEPQTAVEWADANYYLPKESAYQEGRWETLPFQRAIMNAMGSDYIREVNVVKSARVGYSKMLLGVYAYFIEHKQRNTLIWLPTDGDAENFMKTHVEPTIRDIPSLLALAPWYGKKHRDNTLTMKRFTNGRGFWCLGGKAAKNYREKSVDVAGYDELAAFDDDIEQEGSPTFLGDKRIEGSVWPKSIRGSTPKVRGTCQIERAASESPHFMRFHVACPHCGEEQYLKFGDKETPFGLKWTPDDPSSVFYLCEHNACVIRQQELDFTDARYICEKTGIWTRDGILWFSSSGEEIEPPDSVTFHIWTAYSPFTTWVQIVKDWMKTKGDTGKRKTFVNTTLGETWEAKIGERPDAEVMAERKEHYSAPVPDRVAYLTAGIDSQLDRYEMRVWGWGPGEESWLIDRQIIMGRHDDEQTLLRVDEAINKTYTRRNGAEMSISRICWDTGGIDPTIVYERSKKHGLFRVIPIKGASVYGKPVASMPRKRNKNGVYLTEIGTDTAKEQIYNRFTLTPEGDEPLPGAVHFPNNPDIFDLTEAQQLTAEEQVEKWVDGRKKILWDSKKRRNEALDCFVYALAALRISISRWQLDLSALLASLQEEDGAATNKKTLADYARALSGEDE</sequence>
<keyword id="KW-0067">ATP-binding</keyword>
<keyword id="KW-0903">Direct protein sequencing</keyword>
<keyword id="KW-0255">Endonuclease</keyword>
<keyword id="KW-1035">Host cytoplasm</keyword>
<keyword id="KW-0378">Hydrolase</keyword>
<keyword id="KW-0460">Magnesium</keyword>
<keyword id="KW-0479">Metal-binding</keyword>
<keyword id="KW-0540">Nuclease</keyword>
<keyword id="KW-0547">Nucleotide-binding</keyword>
<keyword id="KW-1185">Reference proteome</keyword>
<keyword id="KW-0231">Viral genome packaging</keyword>
<keyword id="KW-1188">Viral release from host cell</keyword>
<feature type="chain" id="PRO_0000077673" description="Terminase, large subunit">
    <location>
        <begin position="1"/>
        <end position="641"/>
    </location>
</feature>
<feature type="region of interest" description="Interaction with the terminase small subunit" evidence="2 16">
    <location>
        <begin position="1"/>
        <end position="48"/>
    </location>
</feature>
<feature type="region of interest" description="DNA packaging/ATPase" evidence="2">
    <location>
        <begin position="166"/>
        <end position="353"/>
    </location>
</feature>
<feature type="region of interest" description="DNA packaging/ATPase" evidence="28 30">
    <location>
        <begin position="166"/>
        <end position="349"/>
    </location>
</feature>
<feature type="region of interest" description="Endonuclease" evidence="2 8 31">
    <location>
        <begin position="401"/>
        <end position="586"/>
    </location>
</feature>
<feature type="region of interest" description="Basic" evidence="5">
    <location>
        <begin position="573"/>
        <end position="584"/>
    </location>
</feature>
<feature type="region of interest" description="Leucine zipper" evidence="2">
    <location>
        <begin position="588"/>
        <end position="616"/>
    </location>
</feature>
<feature type="region of interest" description="Prohead binding" evidence="2">
    <location>
        <begin position="610"/>
        <end position="641"/>
    </location>
</feature>
<feature type="short sequence motif" description="Q motif" evidence="9">
    <location>
        <begin position="42"/>
        <end position="51"/>
    </location>
</feature>
<feature type="short sequence motif" description="Walker A motif" evidence="2 3 9 13 18 34">
    <location>
        <begin position="76"/>
        <end position="83"/>
    </location>
</feature>
<feature type="short sequence motif" description="Walker B motif" evidence="2 18">
    <location>
        <begin position="174"/>
        <end position="179"/>
    </location>
</feature>
<feature type="active site" description="For ATPase activity" evidence="2 18">
    <location>
        <position position="179"/>
    </location>
</feature>
<feature type="binding site" evidence="2">
    <location>
        <position position="401"/>
    </location>
    <ligand>
        <name>Mg(2+)</name>
        <dbReference type="ChEBI" id="CHEBI:18420"/>
        <note>catalytic; for nuclease activity</note>
    </ligand>
</feature>
<feature type="binding site" evidence="2 25 26 27">
    <location>
        <begin position="491"/>
        <end position="498"/>
    </location>
    <ligand>
        <name>ATP</name>
        <dbReference type="ChEBI" id="CHEBI:30616"/>
    </ligand>
</feature>
<feature type="site" description="ATP-binding" evidence="2 3">
    <location>
        <position position="46"/>
    </location>
</feature>
<feature type="mutagenesis site" description="Lethal, 97% defective in cos cleavage; 84% loss of DNA packaging." evidence="4">
    <original>G</original>
    <variation>E</variation>
    <location>
        <position position="18"/>
    </location>
</feature>
<feature type="mutagenesis site" description="Complete loss of high affinity ATPase activity and packaging; no significant effect on endonuclease or strand separation activities." evidence="3">
    <original>Y</original>
    <variation>A</variation>
    <variation>E</variation>
    <location>
        <position position="46"/>
    </location>
</feature>
<feature type="mutagenesis site" description="Complete loss of high affinity ATPase activity and packaging; no significant effect on endonuclease or strand separation activities. 40% decreased velocity of translocation and about 10 times more frequent slipping during DNA translocation." evidence="3 9">
    <original>Y</original>
    <variation>F</variation>
    <location>
        <position position="46"/>
    </location>
</feature>
<feature type="mutagenesis site" description="Complete loss of DNA packaging." evidence="13">
    <original>K</original>
    <variation>A</variation>
    <location>
        <position position="76"/>
    </location>
</feature>
<feature type="mutagenesis site" description="Complete loss of DNA packaging, no effect on cos cleavage, slight increase in strand separation activity." evidence="12">
    <original>K</original>
    <variation>R</variation>
    <location>
        <position position="76"/>
    </location>
</feature>
<feature type="mutagenesis site" description="Lethal, 85% defective in cos cleavage; complete loss of DNA packaging." evidence="4 9 13">
    <original>K</original>
    <variation>R</variation>
    <location>
        <position position="76"/>
    </location>
</feature>
<feature type="mutagenesis site" description="Complete loss of DNA packaging probably due to a loss of DNA packaging initiation efficiency." evidence="13">
    <original>S</original>
    <variation>V</variation>
    <location>
        <position position="77"/>
    </location>
</feature>
<feature type="mutagenesis site" description="Almost complete loss of DNA packaging; more frequent pausing during packaging." evidence="13">
    <original>A</original>
    <variation>V</variation>
    <location>
        <position position="78"/>
    </location>
</feature>
<feature type="mutagenesis site" description="Complete loss of ATPase and DNA packaging activities." evidence="13">
    <original>R</original>
    <variation>A</variation>
    <location>
        <position position="79"/>
    </location>
</feature>
<feature type="mutagenesis site" description="Almost complete loss of DNA packaging; much lower motor velocity and more frequent pausing during packaging." evidence="13">
    <original>R</original>
    <variation>K</variation>
    <location>
        <position position="79"/>
    </location>
</feature>
<feature type="mutagenesis site" description="Intermediate loss of DNA packaging; more frequent pausing during packaging." evidence="13">
    <original>V</original>
    <variation>A</variation>
    <location>
        <position position="80"/>
    </location>
</feature>
<feature type="mutagenesis site" description="Almost complete loss of DNA packaging; much lower motor velocity." evidence="13">
    <original>G</original>
    <variation>A</variation>
    <location>
        <position position="81"/>
    </location>
</feature>
<feature type="mutagenesis site" description="Intermediate loss of DNA packaging; much lower motor velocity." evidence="13">
    <original>Y</original>
    <variation>A</variation>
    <location>
        <position position="82"/>
    </location>
</feature>
<feature type="mutagenesis site" description="Almost complete loss of ATPase and DNA packaging activities." evidence="13">
    <original>S</original>
    <variation>A</variation>
    <location>
        <position position="83"/>
    </location>
</feature>
<feature type="mutagenesis site" description="Intermediate loss of DNA packaging." evidence="13">
    <original>S</original>
    <variation>T</variation>
    <location>
        <position position="83"/>
    </location>
</feature>
<feature type="mutagenesis site" description="40% decreased velocity of translocation and 95% loss of DNA packaging." evidence="9">
    <original>K</original>
    <variation>A</variation>
    <location>
        <position position="84"/>
    </location>
</feature>
<feature type="mutagenesis site" description="Complete loss of high affinity ATPase activity and packaging; no significant effect on endonuclease activity and slight decrease in strand separation." evidence="3">
    <original>K</original>
    <variation>E</variation>
    <location>
        <position position="84"/>
    </location>
</feature>
<feature type="mutagenesis site" description="Lethal, 95% defective in cos cleavage; almost complete loss of DNA packaging." evidence="4">
    <original>N</original>
    <variation>Y</variation>
    <location>
        <position position="166"/>
    </location>
</feature>
<feature type="mutagenesis site" description="Lethal; very weak ATP hydrolysis and complete loss of packaging." evidence="18">
    <original>E</original>
    <variation>A</variation>
    <variation>Q</variation>
    <location>
        <position position="179"/>
    </location>
</feature>
<feature type="mutagenesis site" description="Lethal." evidence="18">
    <original>E</original>
    <variation>C</variation>
    <variation>G</variation>
    <variation>I</variation>
    <variation>L</variation>
    <variation>N</variation>
    <variation>P</variation>
    <variation>R</variation>
    <variation>V</variation>
    <location>
        <position position="179"/>
    </location>
</feature>
<feature type="mutagenesis site" description="Lethal; weak ATP hydrolysis and complete loss of packaging, translocation does not seem to be impaired." evidence="18">
    <original>E</original>
    <variation>D</variation>
    <location>
        <position position="179"/>
    </location>
</feature>
<feature type="mutagenesis site" description="Lethal, 91% defective in cos cleavage; 99% loss of DNA packaging, incomplete packaging." evidence="4">
    <original>L</original>
    <variation>F</variation>
    <location>
        <position position="180"/>
    </location>
</feature>
<feature type="mutagenesis site" description="Lethal, 83% defective in cos cleavage; complete loss of DNA packaging." evidence="4">
    <original>G</original>
    <variation>S</variation>
    <location>
        <position position="191"/>
    </location>
</feature>
<feature type="mutagenesis site" description="Lethal, 66% defective in cos cleavage; 99% loss of DNA packaging, incomplete packaging." evidence="4">
    <original>T</original>
    <variation>M</variation>
    <location>
        <position position="194"/>
    </location>
</feature>
<feature type="mutagenesis site" description="Lethal, 77% defective in cos cleavage; 96% loss of DNA packaging, slow and incomplete packaging." evidence="4">
    <original>G</original>
    <variation>S</variation>
    <location>
        <position position="212"/>
    </location>
</feature>
<feature type="mutagenesis site" description="Lethal, 78% defective in cos cleavage; 84% loss of DNA packaging." evidence="4">
    <original>R</original>
    <variation>H</variation>
    <location>
        <position position="225"/>
    </location>
</feature>
<feature type="mutagenesis site" description="Lethal, 90% defective in cos cleavage; 83% loss of DNA packaging." evidence="4">
    <original>T</original>
    <variation>I</variation>
    <location>
        <position position="328"/>
    </location>
</feature>
<feature type="mutagenesis site" description="Lethal, 89% defective in cos cleavage; 90% loss of DNA packaging." evidence="4">
    <original>D</original>
    <variation>G</variation>
    <location>
        <position position="349"/>
    </location>
</feature>
<feature type="mutagenesis site" description="Completely defective in cos cleavage." evidence="5">
    <original>D</original>
    <variation>G</variation>
    <location>
        <position position="401"/>
    </location>
</feature>
<feature type="mutagenesis site" description="Lethal, 1000x reduced cos cleavage, no effect on DNA translocation, increased Km for ATPase to 9.8." evidence="25 26">
    <original>K</original>
    <variation>A</variation>
    <location>
        <position position="497"/>
    </location>
</feature>
<feature type="mutagenesis site" description="Lethal, 2000x reduced cos cleavage, no effect on DNA translocation, increased Km for ATPase to 24.4." evidence="25 26">
    <original>K</original>
    <variation>D</variation>
    <location>
        <position position="497"/>
    </location>
</feature>
<feature type="mutagenesis site" description="Km for ATPase increased to 68." evidence="25">
    <original>K</original>
    <variation>R</variation>
    <location>
        <position position="497"/>
    </location>
</feature>
<feature type="mutagenesis site" description="Completely defective in cos cleavage." evidence="5">
    <original>E</original>
    <variation>K</variation>
    <location>
        <position position="586"/>
    </location>
</feature>
<name>TERL_LAMBD</name>
<accession>P03708</accession>
<gene>
    <name type="primary">A</name>
    <name type="ordered locus">lambdap02</name>
</gene>
<organismHost>
    <name type="scientific">Escherichia coli</name>
    <dbReference type="NCBI Taxonomy" id="562"/>
</organismHost>
<reference key="1">
    <citation type="journal article" date="1982" name="J. Mol. Biol.">
        <title>Nucleotide sequence of bacteriophage lambda DNA.</title>
        <authorList>
            <person name="Sanger F."/>
            <person name="Coulson A.R."/>
            <person name="Hong G.F."/>
            <person name="Hill D.F."/>
            <person name="Petersen G.B."/>
        </authorList>
    </citation>
    <scope>NUCLEOTIDE SEQUENCE [LARGE SCALE GENOMIC DNA]</scope>
</reference>
<reference key="2">
    <citation type="journal article" date="1998" name="Virology">
        <title>ATP-reactive sites in the bacteriophage lambda packaging protein terminase lie in the N-termini of its subunits, gpA and gpNu1.</title>
        <authorList>
            <person name="Babbar B.K."/>
            <person name="Gold M."/>
        </authorList>
    </citation>
    <scope>PROTEIN SEQUENCE OF 59-70</scope>
    <scope>DOMAIN</scope>
    <scope>SUBUNIT</scope>
</reference>
<reference key="3">
    <citation type="journal article" date="1977" name="Virology">
        <title>Early events in the in vitro packaging of bacteriophage lambda DNA.</title>
        <authorList>
            <person name="Becker A."/>
            <person name="Marko M."/>
            <person name="Gold M."/>
        </authorList>
    </citation>
    <scope>FUNCTION</scope>
</reference>
<reference key="4">
    <citation type="journal article" date="1983" name="J. Biol. Chem.">
        <title>The bacteriophage lambda terminase. Partial purification and preliminary characterization of properties.</title>
        <authorList>
            <person name="Gold M."/>
            <person name="Becker A."/>
        </authorList>
    </citation>
    <scope>FUNCTION</scope>
    <scope>SUBUNIT</scope>
</reference>
<reference key="5">
    <citation type="journal article" date="1988" name="Cell">
        <title>Mechanism of cos DNA cleavage by bacteriophage lambda terminase: multiple roles of ATP.</title>
        <authorList>
            <person name="Higgins R.R."/>
            <person name="Lucko H.J."/>
            <person name="Becker A."/>
        </authorList>
    </citation>
    <scope>FUNCTION</scope>
    <scope>CATALYTIC ACTIVITY</scope>
</reference>
<reference key="6">
    <citation type="journal article" date="1988" name="J. Mol. Biol.">
        <title>Bacteriophage lambda DNA packaging. The product of the FI gene promotes the incorporation of the prohead to the DNA-terminase complex.</title>
        <authorList>
            <person name="Becker A."/>
            <person name="Murialdo H."/>
            <person name="Lucko H."/>
            <person name="Morell J."/>
        </authorList>
    </citation>
    <scope>FUNCTION</scope>
</reference>
<reference key="7">
    <citation type="journal article" date="1988" name="Genetics">
        <title>Domains for protein-protein interactions at the N and C termini of the large subunit of bacteriophage lambda terminase.</title>
        <authorList>
            <person name="Wu W.-F."/>
            <person name="Christiansen S."/>
            <person name="Feiss M."/>
        </authorList>
    </citation>
    <scope>DOMAIN</scope>
    <scope>INTERACTION WITH THE SMALL TERMINASE SUBUNIT</scope>
    <scope>INTERACTION WITH THE PORTAL PROTEIN</scope>
</reference>
<reference key="8">
    <citation type="journal article" date="1992" name="Virology">
        <title>Mutations abolishing the endonuclease activity of bacteriophage lambda terminase lie in two distinct regions of the A gene, one of which may encode a 'leucine zipper' DNA-binding domain.</title>
        <authorList>
            <person name="Davidson A.R."/>
            <person name="Gold M."/>
        </authorList>
    </citation>
    <scope>CATALYTIC ACTIVITY</scope>
    <scope>MUTAGENESIS OF ASP-401 AND GLU-586</scope>
    <scope>DOMAIN</scope>
</reference>
<reference key="9">
    <citation type="journal article" date="1993" name="J. Biol. Chem.">
        <title>Physical and kinetic characterization of the DNA packaging enzyme from bacteriophage lambda.</title>
        <authorList>
            <person name="Tomka M.A."/>
            <person name="Catalano C.E."/>
        </authorList>
    </citation>
    <scope>SUBUNIT</scope>
    <scope>COFACTOR</scope>
    <scope>CATALYTIC ACTIVITY</scope>
    <scope>ACTIVITY REGULATION</scope>
    <scope>BIOPHYSICOCHEMICAL PROPERTIES</scope>
</reference>
<reference key="10">
    <citation type="journal article" date="1994" name="J. Biol. Chem.">
        <title>The in vitro ATPases of bacteriophage lambda terminase and its large subunit, gene product A. The relationship with their DNA helicase and packaging activities.</title>
        <authorList>
            <person name="Rubinchik S."/>
            <person name="Parris W."/>
            <person name="Gold M."/>
        </authorList>
    </citation>
    <scope>FUNCTION</scope>
    <scope>CATALYTIC ACTIVITY</scope>
    <scope>COFACTOR</scope>
    <scope>SUBUNIT</scope>
</reference>
<reference key="11">
    <citation type="journal article" date="1994" name="EMBO J.">
        <title>The lambda terminase enzyme measures the point of its endonucleolytic attack 47 +/- 2 bp away from its site of specific DNA binding, the R site.</title>
        <authorList>
            <person name="Higgins R.R."/>
            <person name="Becker A."/>
        </authorList>
    </citation>
    <scope>FUNCTION</scope>
    <scope>CATALYTIC ACTIVITY</scope>
</reference>
<reference key="12">
    <citation type="journal article" date="1995" name="J. Mol. Biol.">
        <title>Specific interaction of terminase, the DNA packaging enzyme of bacteriophage lambda, with the portal protein of the prohead.</title>
        <authorList>
            <person name="Yeo A."/>
            <person name="Feiss M."/>
        </authorList>
    </citation>
    <scope>INTERACTION WITH THE PORTAL PROTEIN</scope>
</reference>
<reference key="13">
    <citation type="journal article" date="1996" name="Biochemistry">
        <title>Kinetic and mutational dissection of the two ATPase activities of terminase, the DNA packaging enzyme of bacteriophage lambda.</title>
        <authorList>
            <person name="Hwang Y."/>
            <person name="Catalano C.E."/>
            <person name="Feiss M."/>
        </authorList>
    </citation>
    <scope>MUTAGENESIS OF LYS-497</scope>
    <scope>DOMAIN</scope>
</reference>
<reference key="14">
    <citation type="journal article" date="1996" name="J. Mol. Biol.">
        <title>Mutations affecting the high affinity ATPase center of gpA, the large subunit of bacteriophage lambda terminase, inactivate the endonuclease activity of terminase.</title>
        <authorList>
            <person name="Hwang Y."/>
            <person name="Feiss M."/>
        </authorList>
    </citation>
    <scope>MUTAGENESIS OF LYS-497</scope>
    <scope>BIOPHYSICOCHEMICAL PROPERTIES</scope>
    <scope>CATALYTIC ACTIVITY</scope>
    <scope>DOMAIN</scope>
    <scope>SUBUNIT</scope>
</reference>
<reference key="15">
    <citation type="journal article" date="2000" name="J. Mol. Biol.">
        <title>ATPase center of bacteriophage lambda terminase involved in post-cleavage stages of DNA packaging: identification of ATP-interactive amino acids.</title>
        <authorList>
            <person name="Hang J.Q."/>
            <person name="Tack B.F."/>
            <person name="Feiss M."/>
        </authorList>
    </citation>
    <scope>DOMAIN</scope>
    <scope>CATALYTIC ACTIVITY</scope>
    <scope>MUTAGENESIS OF TYR-46 AND LYS-84</scope>
    <scope>SUBUNIT</scope>
</reference>
<reference key="16">
    <citation type="journal article" date="2002" name="J. Mol. Biol.">
        <title>The large subunit of bacteriophage lambda's terminase plays a role in DNA translocation and packaging termination.</title>
        <authorList>
            <person name="Duffy C."/>
            <person name="Feiss M."/>
        </authorList>
    </citation>
    <scope>FUNCTION</scope>
    <scope>MUTAGENESIS OF GLY-18; LYS-76; ASN-166; LEU-180; GLY-191; THR-194; GLY-212; ARG-225; THR-328 AND ASP-349</scope>
    <scope>CATALYTIC ACTIVITY</scope>
    <scope>DOMAIN</scope>
</reference>
<reference key="17">
    <citation type="journal article" date="2005" name="J. Mol. Biol.">
        <title>Self-association properties of the bacteriophage lambda terminase holoenzyme: implications for the DNA packaging motor.</title>
        <authorList>
            <person name="Maluf N.K."/>
            <person name="Yang Q."/>
            <person name="Catalano C.E."/>
        </authorList>
    </citation>
    <scope>SUBUNIT</scope>
</reference>
<reference key="18">
    <citation type="journal article" date="2006" name="Biochemistry">
        <title>Assembly of bacteriophage lambda terminase into a viral DNA maturation and packaging machine.</title>
        <authorList>
            <person name="Maluf N.K."/>
            <person name="Gaussier H."/>
            <person name="Bogner E."/>
            <person name="Feiss M."/>
            <person name="Catalano C.E."/>
        </authorList>
    </citation>
    <scope>SUBUNIT</scope>
</reference>
<reference key="19">
    <citation type="journal article" date="2007" name="J. Mol. Biol.">
        <title>The DNA maturation domain of gpA, the DNA packaging motor protein of bacteriophage lambda, contains an ATPase site associated with endonuclease activity.</title>
        <authorList>
            <person name="Ortega M.E."/>
            <person name="Gaussier H."/>
            <person name="Catalano C.E."/>
        </authorList>
    </citation>
    <scope>DOMAIN</scope>
    <scope>CATALYTIC ACTIVITY</scope>
</reference>
<reference key="20">
    <citation type="journal article" date="2008" name="Annu. Rev. Genet.">
        <title>The bacteriophage DNA packaging motor.</title>
        <authorList>
            <person name="Rao V.B."/>
            <person name="Feiss M."/>
        </authorList>
    </citation>
    <scope>REVIEW</scope>
</reference>
<reference key="21">
    <citation type="journal article" date="2009" name="Proc. Natl. Acad. Sci. U.S.A.">
        <title>The Q motif of a viral packaging motor governs its force generation and communicates ATP recognition to DNA interaction.</title>
        <authorList>
            <person name="Tsay J.M."/>
            <person name="Sippy J."/>
            <person name="Feiss M."/>
            <person name="Smith D.E."/>
        </authorList>
    </citation>
    <scope>MUTAGENESIS OF TYR-46; LYS-76 AND LYS-84</scope>
    <scope>DOMAIN</scope>
</reference>
<reference key="22">
    <citation type="journal article" date="2012" name="Biochemistry">
        <title>Energy-independent helicase activity of a viral genome packaging motor.</title>
        <authorList>
            <person name="Chang J.R."/>
            <person name="Andrews B.T."/>
            <person name="Catalano C.E."/>
        </authorList>
    </citation>
    <scope>FUNCTION</scope>
</reference>
<reference key="23">
    <citation type="journal article" date="2012" name="Biochemistry">
        <title>The enzymology of a viral genome packaging motor is influenced by the assembly state of the motor subunits.</title>
        <authorList>
            <person name="Andrews B.T."/>
            <person name="Catalano C.E."/>
        </authorList>
    </citation>
    <scope>FUNCTION</scope>
    <scope>CATALYTIC ACTIVITY</scope>
</reference>
<reference key="24">
    <citation type="journal article" date="2013" name="Proc. Natl. Acad. Sci. U.S.A.">
        <title>Strong subunit coordination drives a powerful viral DNA packaging motor.</title>
        <authorList>
            <person name="Andrews B.T."/>
            <person name="Catalano C.E."/>
        </authorList>
    </citation>
    <scope>MUTAGENESIS OF LYS-76</scope>
</reference>
<reference key="25">
    <citation type="journal article" date="2016" name="J. Mol. Biol.">
        <title>Walker-A motif acts to coordinate ATP hydrolysis with motor output in viral DNA packaging.</title>
        <authorList>
            <person name="delToro D."/>
            <person name="Ortiz D."/>
            <person name="Ordyan M."/>
            <person name="Sippy J."/>
            <person name="Oh C.S."/>
            <person name="Keller N."/>
            <person name="Feiss M."/>
            <person name="Catalano C.E."/>
            <person name="Smith D.E."/>
        </authorList>
    </citation>
    <scope>MUTAGENESIS OF LYS-76; SER-77; ALA-78; ARG-79; VAL-80; GLY-81; TYR-82; SER-83 AND LYS-84</scope>
</reference>
<reference key="26">
    <citation type="journal article" date="2017" name="Biophys. J.">
        <title>Physical and functional characterization of a viral genome maturation complex.</title>
        <authorList>
            <person name="Yang T.C."/>
            <person name="Ortiz D."/>
            <person name="Yang Q."/>
            <person name="De Angelis R.W."/>
            <person name="Sanyal S.J."/>
            <person name="Catalano C.E."/>
        </authorList>
    </citation>
    <scope>FUNCTION</scope>
    <scope>SUBUNIT</scope>
</reference>
<reference key="27">
    <citation type="journal article" date="2019" name="Nucleic Acids Res.">
        <title>Evidence that a catalytic glutamate and an 'Arginine Toggle' act in concert to mediate ATP hydrolysis and mechanochemical coupling in a viral DNA packaging motor.</title>
        <authorList>
            <person name="Ortiz D."/>
            <person name="delToro D."/>
            <person name="Ordyan M."/>
            <person name="Pajak J."/>
            <person name="Sippy J."/>
            <person name="Catala A."/>
            <person name="Oh C.S."/>
            <person name="Vu A."/>
            <person name="Arya G."/>
            <person name="Feiss M."/>
            <person name="Smith D.E."/>
            <person name="Catalano C.E."/>
        </authorList>
    </citation>
    <scope>SUBUNIT</scope>
    <scope>ACTIVE SITE</scope>
    <scope>MUTAGENESIS OF GLU-179</scope>
    <scope>CATALYTIC ACTIVITY</scope>
    <scope>REACTION MECHANISM</scope>
</reference>
<evidence type="ECO:0000250" key="1">
    <source>
        <dbReference type="UniProtKB" id="P0A7Y4"/>
    </source>
</evidence>
<evidence type="ECO:0000255" key="2">
    <source>
        <dbReference type="HAMAP-Rule" id="MF_04144"/>
    </source>
</evidence>
<evidence type="ECO:0000269" key="3">
    <source>
    </source>
</evidence>
<evidence type="ECO:0000269" key="4">
    <source>
    </source>
</evidence>
<evidence type="ECO:0000269" key="5">
    <source>
    </source>
</evidence>
<evidence type="ECO:0000269" key="6">
    <source>
    </source>
</evidence>
<evidence type="ECO:0000269" key="7">
    <source>
    </source>
</evidence>
<evidence type="ECO:0000269" key="8">
    <source>
    </source>
</evidence>
<evidence type="ECO:0000269" key="9">
    <source>
    </source>
</evidence>
<evidence type="ECO:0000269" key="10">
    <source>
    </source>
</evidence>
<evidence type="ECO:0000269" key="11">
    <source>
    </source>
</evidence>
<evidence type="ECO:0000269" key="12">
    <source>
    </source>
</evidence>
<evidence type="ECO:0000269" key="13">
    <source>
    </source>
</evidence>
<evidence type="ECO:0000269" key="14">
    <source>
    </source>
</evidence>
<evidence type="ECO:0000269" key="15">
    <source>
    </source>
</evidence>
<evidence type="ECO:0000269" key="16">
    <source>
    </source>
</evidence>
<evidence type="ECO:0000269" key="17">
    <source>
    </source>
</evidence>
<evidence type="ECO:0000269" key="18">
    <source>
    </source>
</evidence>
<evidence type="ECO:0000269" key="19">
    <source>
    </source>
</evidence>
<evidence type="ECO:0000269" key="20">
    <source>
    </source>
</evidence>
<evidence type="ECO:0000269" key="21">
    <source>
    </source>
</evidence>
<evidence type="ECO:0000269" key="22">
    <source>
    </source>
</evidence>
<evidence type="ECO:0000269" key="23">
    <source>
    </source>
</evidence>
<evidence type="ECO:0000269" key="24">
    <source>
    </source>
</evidence>
<evidence type="ECO:0000269" key="25">
    <source>
    </source>
</evidence>
<evidence type="ECO:0000269" key="26">
    <source>
    </source>
</evidence>
<evidence type="ECO:0000269" key="27">
    <source>
    </source>
</evidence>
<evidence type="ECO:0000303" key="28">
    <source>
    </source>
</evidence>
<evidence type="ECO:0000303" key="29">
    <source>
    </source>
</evidence>
<evidence type="ECO:0000305" key="30">
    <source>
    </source>
</evidence>
<evidence type="ECO:0000305" key="31">
    <source>
    </source>
</evidence>
<evidence type="ECO:0000305" key="32">
    <source>
    </source>
</evidence>
<evidence type="ECO:0000305" key="33">
    <source>
    </source>
</evidence>
<evidence type="ECO:0000305" key="34">
    <source>
    </source>
</evidence>
<comment type="function">
    <text evidence="2 4 6 10 11 14 15 17 19 21 22 23 24 30">The terminase large subunit acts as an ATP driven molecular motor necessary for viral DNA translocation into empty capsids and as an endonuclease that cuts the viral genome from the concetamer to initiate and to end the packaging reaction (PubMed:11866517, PubMed:23134123). The terminase lies at a unique vertex of the procapsid and is composed of two subunits, a small terminase subunit involved in viral DNA recognition (binding to packaging sequence cos), and a large terminase subunit possessing endonucleolytic and ATPase activities (DNA maturation and packaging) (PubMed:11866517, PubMed:23134123). The terminase binds cooperatively with the host factor IHFA/IHFB to the cos site at the junction of adjacent viral genomes (PubMed:15755448, PubMed:22191393, PubMed:28445747). The endonuclease activity cleaves the viral DNA generating 5'overhangs of 12 bp in length (PubMed:2970303, PubMed:6315731, PubMed:7813453, PubMed:8428984). The strand separation activity separates the cohesive ends generating the single-stranded 'sticky' ends of the mature genome (PubMed:2970303, PubMed:6315731, PubMed:8175794). IHFA/IHFB is also necessary for the strand separation activity of the terminase (PubMed:22191393). The terminase remains bound to the left end of the genome to be packaged, forming a stable DNA-terminase complex (PubMed:860405). In a reaction facilitated by the viral assembly catalyst gpFI, the DNA-terminase complex binds to the portal of the procapsid thereby activating the translocase activity of the terminase (PubMed:2965251). The terminase packages the viral DNA into the procapsid until the next cos site on the concatemer reaches the complex ('unit length' packaging) (Probable) (PubMed:2965251, PubMed:860405). The downstream cos site is then cut generating the mature right end of the genome, the heterotrimer undocks from the DNA-filled head and remains bound to the left end of concatemer's next genome (PubMed:2970303).</text>
</comment>
<comment type="catalytic activity">
    <reaction evidence="2 5 8 11 17 21">
        <text>Endonucleolytic cleavage of DNA to give specific double-stranded fragments with terminal 5'-phosphates.</text>
        <dbReference type="EC" id="3.1.21.4"/>
    </reaction>
</comment>
<comment type="cofactor">
    <cofactor evidence="2 22 23">
        <name>Mg(2+)</name>
        <dbReference type="ChEBI" id="CHEBI:18420"/>
    </cofactor>
    <text evidence="1 22 23">Probably binds 2 Mg(2+) ions per subunit (By similarity). Necessary for the ATPase activity (PubMed:8175794, PubMed:8428984). Zn(2+) Co(2+), Cd(2+), Cu(2+), Ca(2+), Sr(2+) and Ba(2+) do not function as cofactor (PubMed:8428984).</text>
</comment>
<comment type="activity regulation">
    <text evidence="23">Inhibited by NaCl and KC1 at concentrations higher than 100 mM and by glutamate at concentrations greater than 150 mM.</text>
</comment>
<comment type="biophysicochemical properties">
    <kinetics>
        <KM evidence="23 25 26">4.6 uM for ATP for the high affinity ATPase</KM>
        <text evidence="4 28">The high affinity ATPase activity corresponds to the packaging ATPase site at the N-terminus.</text>
    </kinetics>
    <phDependence>
        <text evidence="22">Optimum pH is 8.0-9.0 for the ATPase activity.</text>
    </phDependence>
</comment>
<comment type="subunit">
    <text evidence="2 3 6 7 14 16 18 19 20 22 23 26 27 33">Heterotrimer of two small and one large terminase subunits (Probable) (PubMed:15755448, PubMed:30541105, PubMed:6315731, PubMed:8428984). The catalytically competent terminase is composed of a tetramer of heterotrimers (PubMed:10993723, PubMed:28445747, PubMed:30541105, PubMed:8175794, PubMed:8794874, PubMed:9705918). The tetramer forms a ring structure large enough to encircle duplex DNA (PubMed:30541105). Host IHFA/IHFB induces bending of viral DNA to facilitate the assembly of the terminase tetramer of heterotrimers (PubMed:17176048, PubMed:28445747). Interacts (via N-terminus) with the terminase small subunit (via C-terminus) (PubMed:2969839). Interacts (via C-terminus) with the portal protein; this interaction allows the packaging of viral DNA (PubMed:7799432).</text>
</comment>
<comment type="subcellular location">
    <subcellularLocation>
        <location evidence="2">Host cytoplasm</location>
    </subcellularLocation>
    <text evidence="2">The terminase lies at a unique vertex of the procapsid during viral DNA packaging.</text>
</comment>
<comment type="domain">
    <text evidence="2 3 4 5 8 9 16 25 26 27 32">The N-terminus is involved in the formation of the heterotrimer with the small subunit (PubMed:2969839). The N-terminus part contains the translocase activity involved in DNA packaging (PubMed:11866517). At the N-terminus, there is a high affinity ATPase center that is probably needed for the packaging activity (PubMed:10993723, PubMed:19706522, PubMed:8611586, PubMed:8794874, PubMed:9705918). The Walker A motif of the ATPase center is responsible for interacting with the ATP phosphate and the Q motif governs force generation and the interaction with DNA (PubMed:19706522). The C-terminus contains the site specific endonuclease (cos-cleavage) and strand separation activities required for genome maturation (PubMed:17870092). A second ATPase catalytic site regulates the genome maturation (PubMed:17870092). The C-terminus very end is involved in binding to the procapsid (PubMed:2969839). Contains a basic leucine zipper (bZIP) that may be involved in the formation of the terminase (Probable) (PubMed:1534952).</text>
</comment>
<comment type="similarity">
    <text evidence="2">Belongs to the lambdavirus large terminase family.</text>
</comment>
<dbReference type="EC" id="3.1.21.4" evidence="2 5 8 11 17 21 26"/>
<dbReference type="EC" id="3.6.4.-" evidence="2 3 4 11 18 23"/>
<dbReference type="EMBL" id="J02459">
    <property type="protein sequence ID" value="AAA96534.1"/>
    <property type="molecule type" value="Genomic_DNA"/>
</dbReference>
<dbReference type="PIR" id="D04333">
    <property type="entry name" value="JVBPAL"/>
</dbReference>
<dbReference type="RefSeq" id="NP_040581.1">
    <property type="nucleotide sequence ID" value="NC_001416.1"/>
</dbReference>
<dbReference type="IntAct" id="P03708">
    <property type="interactions" value="10"/>
</dbReference>
<dbReference type="GeneID" id="2703524"/>
<dbReference type="KEGG" id="vg:2703524"/>
<dbReference type="Proteomes" id="UP000001711">
    <property type="component" value="Genome"/>
</dbReference>
<dbReference type="GO" id="GO:0030430">
    <property type="term" value="C:host cell cytoplasm"/>
    <property type="evidence" value="ECO:0007669"/>
    <property type="project" value="UniProtKB-SubCell"/>
</dbReference>
<dbReference type="GO" id="GO:0098009">
    <property type="term" value="C:viral terminase, large subunit"/>
    <property type="evidence" value="ECO:0000314"/>
    <property type="project" value="UniProtKB"/>
</dbReference>
<dbReference type="GO" id="GO:0005524">
    <property type="term" value="F:ATP binding"/>
    <property type="evidence" value="ECO:0007669"/>
    <property type="project" value="UniProtKB-UniRule"/>
</dbReference>
<dbReference type="GO" id="GO:0016887">
    <property type="term" value="F:ATP hydrolysis activity"/>
    <property type="evidence" value="ECO:0000314"/>
    <property type="project" value="UniProtKB"/>
</dbReference>
<dbReference type="GO" id="GO:0003678">
    <property type="term" value="F:DNA helicase activity"/>
    <property type="evidence" value="ECO:0000314"/>
    <property type="project" value="UniProtKB"/>
</dbReference>
<dbReference type="GO" id="GO:0004519">
    <property type="term" value="F:endonuclease activity"/>
    <property type="evidence" value="ECO:0000314"/>
    <property type="project" value="UniProtKB"/>
</dbReference>
<dbReference type="GO" id="GO:0046872">
    <property type="term" value="F:metal ion binding"/>
    <property type="evidence" value="ECO:0007669"/>
    <property type="project" value="UniProtKB-UniRule"/>
</dbReference>
<dbReference type="GO" id="GO:0009036">
    <property type="term" value="F:type II site-specific deoxyribonuclease activity"/>
    <property type="evidence" value="ECO:0007669"/>
    <property type="project" value="UniProtKB-UniRule"/>
</dbReference>
<dbReference type="GO" id="GO:0019073">
    <property type="term" value="P:viral DNA genome packaging"/>
    <property type="evidence" value="ECO:0000314"/>
    <property type="project" value="UniProtKB"/>
</dbReference>
<dbReference type="FunFam" id="3.40.50.300:FF:001158">
    <property type="entry name" value="Phage terminase large subunit"/>
    <property type="match status" value="1"/>
</dbReference>
<dbReference type="Gene3D" id="3.40.50.300">
    <property type="entry name" value="P-loop containing nucleotide triphosphate hydrolases"/>
    <property type="match status" value="1"/>
</dbReference>
<dbReference type="HAMAP" id="MF_04144">
    <property type="entry name" value="TERL_LAMBDA"/>
    <property type="match status" value="1"/>
</dbReference>
<dbReference type="InterPro" id="IPR046453">
    <property type="entry name" value="GpA_ATPase"/>
</dbReference>
<dbReference type="InterPro" id="IPR046454">
    <property type="entry name" value="GpA_endonuclease"/>
</dbReference>
<dbReference type="InterPro" id="IPR027417">
    <property type="entry name" value="P-loop_NTPase"/>
</dbReference>
<dbReference type="InterPro" id="IPR008866">
    <property type="entry name" value="Phage_lambda_GpA-like"/>
</dbReference>
<dbReference type="InterPro" id="IPR051220">
    <property type="entry name" value="TFA_Chaperone"/>
</dbReference>
<dbReference type="PANTHER" id="PTHR34413:SF2">
    <property type="entry name" value="PROPHAGE TAIL FIBER ASSEMBLY PROTEIN HOMOLOG TFAE-RELATED"/>
    <property type="match status" value="1"/>
</dbReference>
<dbReference type="PANTHER" id="PTHR34413">
    <property type="entry name" value="PROPHAGE TAIL FIBER ASSEMBLY PROTEIN HOMOLOG TFAE-RELATED-RELATED"/>
    <property type="match status" value="1"/>
</dbReference>
<dbReference type="Pfam" id="PF05876">
    <property type="entry name" value="GpA_ATPase"/>
    <property type="match status" value="1"/>
</dbReference>
<dbReference type="Pfam" id="PF20454">
    <property type="entry name" value="GpA_nuclease"/>
    <property type="match status" value="1"/>
</dbReference>
<protein>
    <recommendedName>
        <fullName evidence="2 29">Terminase, large subunit</fullName>
    </recommendedName>
    <alternativeName>
        <fullName>DNA-packaging protein A</fullName>
    </alternativeName>
    <alternativeName>
        <fullName evidence="2">Large terminase protein</fullName>
    </alternativeName>
    <alternativeName>
        <fullName>gpA</fullName>
    </alternativeName>
    <domain>
        <recommendedName>
            <fullName evidence="2">Endonuclease</fullName>
            <ecNumber evidence="2 5 8 11 17 21 26">3.1.21.4</ecNumber>
        </recommendedName>
    </domain>
    <domain>
        <recommendedName>
            <fullName evidence="2">ATPase</fullName>
            <ecNumber evidence="2 3 4 11 18 23">3.6.4.-</ecNumber>
        </recommendedName>
    </domain>
</protein>
<proteinExistence type="evidence at protein level"/>